<organismHost>
    <name type="scientific">Mus musculus</name>
    <name type="common">Mouse</name>
    <dbReference type="NCBI Taxonomy" id="10090"/>
</organismHost>
<sequence>MAVCIIDHDNIRGVIYFEPVHGKDKVLGSVIGLKSGTYSLIIHRYGDISRGCDSIDSPEIFIGNIFVNRYGVAYVYLDTDVNISTIIGKALSISKNDQRLACGVIGISFINEKIIHFLTINENGV</sequence>
<protein>
    <recommendedName>
        <fullName>Cu-Zn superoxide dismutase-like protein</fullName>
    </recommendedName>
</protein>
<keyword id="KW-1015">Disulfide bond</keyword>
<keyword id="KW-1035">Host cytoplasm</keyword>
<proteinExistence type="inferred from homology"/>
<accession>Q8JL75</accession>
<organism>
    <name type="scientific">Ectromelia virus (strain Moscow)</name>
    <name type="common">ECTV</name>
    <name type="synonym">Mousepox virus</name>
    <dbReference type="NCBI Taxonomy" id="265874"/>
    <lineage>
        <taxon>Viruses</taxon>
        <taxon>Varidnaviria</taxon>
        <taxon>Bamfordvirae</taxon>
        <taxon>Nucleocytoviricota</taxon>
        <taxon>Pokkesviricetes</taxon>
        <taxon>Chitovirales</taxon>
        <taxon>Poxviridae</taxon>
        <taxon>Chordopoxvirinae</taxon>
        <taxon>Orthopoxvirus</taxon>
        <taxon>Ectromelia virus</taxon>
    </lineage>
</organism>
<feature type="chain" id="PRO_0000164175" description="Cu-Zn superoxide dismutase-like protein">
    <location>
        <begin position="1"/>
        <end position="125"/>
    </location>
</feature>
<feature type="disulfide bond" evidence="1">
    <location>
        <begin position="52"/>
        <end position="102"/>
    </location>
</feature>
<name>SODL_ECTVM</name>
<reference key="1">
    <citation type="journal article" date="2003" name="Virology">
        <title>The genomic sequence of Ectromelia virus, the causative agent of mousepox.</title>
        <authorList>
            <person name="Chen N."/>
            <person name="Danila M.I."/>
            <person name="Feng Z."/>
            <person name="Buller R.M."/>
            <person name="Wang C."/>
            <person name="Han X."/>
            <person name="Lefkowitz E.J."/>
            <person name="Upton C."/>
        </authorList>
    </citation>
    <scope>NUCLEOTIDE SEQUENCE [LARGE SCALE GENOMIC DNA]</scope>
</reference>
<evidence type="ECO:0000250" key="1"/>
<evidence type="ECO:0000305" key="2"/>
<dbReference type="EMBL" id="AF012825">
    <property type="protein sequence ID" value="AAM92449.1"/>
    <property type="molecule type" value="Genomic_DNA"/>
</dbReference>
<dbReference type="RefSeq" id="NP_671663.1">
    <property type="nucleotide sequence ID" value="NC_004105.1"/>
</dbReference>
<dbReference type="SMR" id="Q8JL75"/>
<dbReference type="GeneID" id="951495"/>
<dbReference type="KEGG" id="vg:951495"/>
<dbReference type="Proteomes" id="UP000172110">
    <property type="component" value="Segment"/>
</dbReference>
<dbReference type="GO" id="GO:0030430">
    <property type="term" value="C:host cell cytoplasm"/>
    <property type="evidence" value="ECO:0007669"/>
    <property type="project" value="UniProtKB-SubCell"/>
</dbReference>
<dbReference type="GO" id="GO:0046872">
    <property type="term" value="F:metal ion binding"/>
    <property type="evidence" value="ECO:0007669"/>
    <property type="project" value="InterPro"/>
</dbReference>
<dbReference type="GO" id="GO:0006801">
    <property type="term" value="P:superoxide metabolic process"/>
    <property type="evidence" value="ECO:0007669"/>
    <property type="project" value="InterPro"/>
</dbReference>
<dbReference type="Gene3D" id="2.60.40.200">
    <property type="entry name" value="Superoxide dismutase, copper/zinc binding domain"/>
    <property type="match status" value="1"/>
</dbReference>
<dbReference type="InterPro" id="IPR036423">
    <property type="entry name" value="SOD-like_Cu/Zn_dom_sf"/>
</dbReference>
<dbReference type="SUPFAM" id="SSF49329">
    <property type="entry name" value="Cu,Zn superoxide dismutase-like"/>
    <property type="match status" value="1"/>
</dbReference>
<comment type="function">
    <text evidence="1">Virion protein with no enzymatic activity.</text>
</comment>
<comment type="subcellular location">
    <subcellularLocation>
        <location evidence="1">Host cytoplasm</location>
    </subcellularLocation>
</comment>
<comment type="similarity">
    <text evidence="2">Belongs to the Cu-Zn superoxide dismutase family.</text>
</comment>
<gene>
    <name type="ordered locus">EVM144</name>
</gene>